<protein>
    <recommendedName>
        <fullName evidence="1">Cell division protein ZapA</fullName>
    </recommendedName>
    <alternativeName>
        <fullName evidence="1">Z ring-associated protein ZapA</fullName>
    </alternativeName>
</protein>
<comment type="function">
    <text evidence="1">Activator of cell division through the inhibition of FtsZ GTPase activity, therefore promoting FtsZ assembly into bundles of protofilaments necessary for the formation of the division Z ring. It is recruited early at mid-cell but it is not essential for cell division.</text>
</comment>
<comment type="subunit">
    <text evidence="1">Homodimer. Interacts with FtsZ.</text>
</comment>
<comment type="subcellular location">
    <subcellularLocation>
        <location evidence="1">Cytoplasm</location>
    </subcellularLocation>
    <text evidence="1">Localizes at mid-cell.</text>
</comment>
<comment type="similarity">
    <text evidence="1">Belongs to the ZapA family. Type 1 subfamily.</text>
</comment>
<feature type="chain" id="PRO_0000169352" description="Cell division protein ZapA">
    <location>
        <begin position="1"/>
        <end position="109"/>
    </location>
</feature>
<feature type="coiled-coil region" evidence="1">
    <location>
        <begin position="21"/>
        <end position="99"/>
    </location>
</feature>
<keyword id="KW-0131">Cell cycle</keyword>
<keyword id="KW-0132">Cell division</keyword>
<keyword id="KW-0175">Coiled coil</keyword>
<keyword id="KW-0963">Cytoplasm</keyword>
<keyword id="KW-1185">Reference proteome</keyword>
<keyword id="KW-0717">Septation</keyword>
<sequence>MSAQPVDIQIFGRSLRVNCPPDQRDALNQAADDLNQRLQDLKERTRVTNTEQLVFIAALNISYELAQEKAKTRDYAASMEQRIRMLQQTIEQALLEQGRITEKTNQNFE</sequence>
<proteinExistence type="inferred from homology"/>
<name>ZAPA_ECOL6</name>
<reference key="1">
    <citation type="journal article" date="2002" name="Proc. Natl. Acad. Sci. U.S.A.">
        <title>Extensive mosaic structure revealed by the complete genome sequence of uropathogenic Escherichia coli.</title>
        <authorList>
            <person name="Welch R.A."/>
            <person name="Burland V."/>
            <person name="Plunkett G. III"/>
            <person name="Redford P."/>
            <person name="Roesch P."/>
            <person name="Rasko D."/>
            <person name="Buckles E.L."/>
            <person name="Liou S.-R."/>
            <person name="Boutin A."/>
            <person name="Hackett J."/>
            <person name="Stroud D."/>
            <person name="Mayhew G.F."/>
            <person name="Rose D.J."/>
            <person name="Zhou S."/>
            <person name="Schwartz D.C."/>
            <person name="Perna N.T."/>
            <person name="Mobley H.L.T."/>
            <person name="Donnenberg M.S."/>
            <person name="Blattner F.R."/>
        </authorList>
    </citation>
    <scope>NUCLEOTIDE SEQUENCE [LARGE SCALE GENOMIC DNA]</scope>
    <source>
        <strain>CFT073 / ATCC 700928 / UPEC</strain>
    </source>
</reference>
<organism>
    <name type="scientific">Escherichia coli O6:H1 (strain CFT073 / ATCC 700928 / UPEC)</name>
    <dbReference type="NCBI Taxonomy" id="199310"/>
    <lineage>
        <taxon>Bacteria</taxon>
        <taxon>Pseudomonadati</taxon>
        <taxon>Pseudomonadota</taxon>
        <taxon>Gammaproteobacteria</taxon>
        <taxon>Enterobacterales</taxon>
        <taxon>Enterobacteriaceae</taxon>
        <taxon>Escherichia</taxon>
    </lineage>
</organism>
<accession>P0ADS3</accession>
<accession>P45580</accession>
<gene>
    <name evidence="1" type="primary">zapA</name>
    <name type="ordered locus">c3492</name>
</gene>
<evidence type="ECO:0000255" key="1">
    <source>
        <dbReference type="HAMAP-Rule" id="MF_02012"/>
    </source>
</evidence>
<dbReference type="EMBL" id="AE014075">
    <property type="protein sequence ID" value="AAN81940.1"/>
    <property type="molecule type" value="Genomic_DNA"/>
</dbReference>
<dbReference type="RefSeq" id="WP_001276008.1">
    <property type="nucleotide sequence ID" value="NZ_CP051263.1"/>
</dbReference>
<dbReference type="SMR" id="P0ADS3"/>
<dbReference type="STRING" id="199310.c3492"/>
<dbReference type="GeneID" id="93779091"/>
<dbReference type="KEGG" id="ecc:c3492"/>
<dbReference type="eggNOG" id="COG3027">
    <property type="taxonomic scope" value="Bacteria"/>
</dbReference>
<dbReference type="HOGENOM" id="CLU_116623_3_0_6"/>
<dbReference type="BioCyc" id="ECOL199310:C3492-MONOMER"/>
<dbReference type="Proteomes" id="UP000001410">
    <property type="component" value="Chromosome"/>
</dbReference>
<dbReference type="GO" id="GO:0032153">
    <property type="term" value="C:cell division site"/>
    <property type="evidence" value="ECO:0007669"/>
    <property type="project" value="TreeGrafter"/>
</dbReference>
<dbReference type="GO" id="GO:0030428">
    <property type="term" value="C:cell septum"/>
    <property type="evidence" value="ECO:0007669"/>
    <property type="project" value="TreeGrafter"/>
</dbReference>
<dbReference type="GO" id="GO:0005829">
    <property type="term" value="C:cytosol"/>
    <property type="evidence" value="ECO:0007669"/>
    <property type="project" value="TreeGrafter"/>
</dbReference>
<dbReference type="GO" id="GO:0005886">
    <property type="term" value="C:plasma membrane"/>
    <property type="evidence" value="ECO:0007669"/>
    <property type="project" value="UniProtKB-UniRule"/>
</dbReference>
<dbReference type="GO" id="GO:0000917">
    <property type="term" value="P:division septum assembly"/>
    <property type="evidence" value="ECO:0007669"/>
    <property type="project" value="UniProtKB-KW"/>
</dbReference>
<dbReference type="GO" id="GO:0043093">
    <property type="term" value="P:FtsZ-dependent cytokinesis"/>
    <property type="evidence" value="ECO:0007669"/>
    <property type="project" value="TreeGrafter"/>
</dbReference>
<dbReference type="GO" id="GO:0000921">
    <property type="term" value="P:septin ring assembly"/>
    <property type="evidence" value="ECO:0007669"/>
    <property type="project" value="TreeGrafter"/>
</dbReference>
<dbReference type="FunFam" id="1.20.5.50:FF:000001">
    <property type="entry name" value="Cell division protein ZapA"/>
    <property type="match status" value="1"/>
</dbReference>
<dbReference type="FunFam" id="3.30.160.880:FF:000001">
    <property type="entry name" value="Cell division protein ZapA"/>
    <property type="match status" value="1"/>
</dbReference>
<dbReference type="Gene3D" id="1.20.5.50">
    <property type="match status" value="1"/>
</dbReference>
<dbReference type="Gene3D" id="3.30.160.880">
    <property type="entry name" value="Cell division protein ZapA protomer, N-terminal domain"/>
    <property type="match status" value="1"/>
</dbReference>
<dbReference type="HAMAP" id="MF_02012">
    <property type="entry name" value="ZapA_type1"/>
    <property type="match status" value="1"/>
</dbReference>
<dbReference type="InterPro" id="IPR007838">
    <property type="entry name" value="Cell_div_ZapA-like"/>
</dbReference>
<dbReference type="InterPro" id="IPR036192">
    <property type="entry name" value="Cell_div_ZapA-like_sf"/>
</dbReference>
<dbReference type="InterPro" id="IPR023771">
    <property type="entry name" value="Cell_div_ZapA_eubact"/>
</dbReference>
<dbReference type="InterPro" id="IPR042233">
    <property type="entry name" value="Cell_div_ZapA_N"/>
</dbReference>
<dbReference type="NCBIfam" id="NF008209">
    <property type="entry name" value="PRK10972.1"/>
    <property type="match status" value="1"/>
</dbReference>
<dbReference type="PANTHER" id="PTHR34981">
    <property type="entry name" value="CELL DIVISION PROTEIN ZAPA"/>
    <property type="match status" value="1"/>
</dbReference>
<dbReference type="PANTHER" id="PTHR34981:SF1">
    <property type="entry name" value="CELL DIVISION PROTEIN ZAPA"/>
    <property type="match status" value="1"/>
</dbReference>
<dbReference type="Pfam" id="PF05164">
    <property type="entry name" value="ZapA"/>
    <property type="match status" value="1"/>
</dbReference>
<dbReference type="SUPFAM" id="SSF102829">
    <property type="entry name" value="Cell division protein ZapA-like"/>
    <property type="match status" value="1"/>
</dbReference>